<name>RIHA_SALTI</name>
<feature type="chain" id="PRO_0000206819" description="Pyrimidine-specific ribonucleoside hydrolase RihA">
    <location>
        <begin position="1"/>
        <end position="311"/>
    </location>
</feature>
<feature type="active site" evidence="1">
    <location>
        <position position="240"/>
    </location>
</feature>
<evidence type="ECO:0000255" key="1">
    <source>
        <dbReference type="HAMAP-Rule" id="MF_01431"/>
    </source>
</evidence>
<keyword id="KW-0326">Glycosidase</keyword>
<keyword id="KW-0378">Hydrolase</keyword>
<organism>
    <name type="scientific">Salmonella typhi</name>
    <dbReference type="NCBI Taxonomy" id="90370"/>
    <lineage>
        <taxon>Bacteria</taxon>
        <taxon>Pseudomonadati</taxon>
        <taxon>Pseudomonadota</taxon>
        <taxon>Gammaproteobacteria</taxon>
        <taxon>Enterobacterales</taxon>
        <taxon>Enterobacteriaceae</taxon>
        <taxon>Salmonella</taxon>
    </lineage>
</organism>
<proteinExistence type="inferred from homology"/>
<accession>Q8Z8H0</accession>
<accession>Q7C8K6</accession>
<comment type="function">
    <text evidence="1">Hydrolyzes cytidine or uridine to ribose and cytosine or uracil, respectively.</text>
</comment>
<comment type="similarity">
    <text evidence="1">Belongs to the IUNH family. RihA subfamily.</text>
</comment>
<protein>
    <recommendedName>
        <fullName evidence="1">Pyrimidine-specific ribonucleoside hydrolase RihA</fullName>
        <ecNumber evidence="1">3.2.-.-</ecNumber>
    </recommendedName>
    <alternativeName>
        <fullName evidence="1">Cytidine/uridine-specific hydrolase</fullName>
    </alternativeName>
</protein>
<gene>
    <name evidence="1" type="primary">rihA</name>
    <name type="ordered locus">STY0706</name>
    <name type="ordered locus">t2212</name>
</gene>
<reference key="1">
    <citation type="journal article" date="2001" name="Nature">
        <title>Complete genome sequence of a multiple drug resistant Salmonella enterica serovar Typhi CT18.</title>
        <authorList>
            <person name="Parkhill J."/>
            <person name="Dougan G."/>
            <person name="James K.D."/>
            <person name="Thomson N.R."/>
            <person name="Pickard D."/>
            <person name="Wain J."/>
            <person name="Churcher C.M."/>
            <person name="Mungall K.L."/>
            <person name="Bentley S.D."/>
            <person name="Holden M.T.G."/>
            <person name="Sebaihia M."/>
            <person name="Baker S."/>
            <person name="Basham D."/>
            <person name="Brooks K."/>
            <person name="Chillingworth T."/>
            <person name="Connerton P."/>
            <person name="Cronin A."/>
            <person name="Davis P."/>
            <person name="Davies R.M."/>
            <person name="Dowd L."/>
            <person name="White N."/>
            <person name="Farrar J."/>
            <person name="Feltwell T."/>
            <person name="Hamlin N."/>
            <person name="Haque A."/>
            <person name="Hien T.T."/>
            <person name="Holroyd S."/>
            <person name="Jagels K."/>
            <person name="Krogh A."/>
            <person name="Larsen T.S."/>
            <person name="Leather S."/>
            <person name="Moule S."/>
            <person name="O'Gaora P."/>
            <person name="Parry C."/>
            <person name="Quail M.A."/>
            <person name="Rutherford K.M."/>
            <person name="Simmonds M."/>
            <person name="Skelton J."/>
            <person name="Stevens K."/>
            <person name="Whitehead S."/>
            <person name="Barrell B.G."/>
        </authorList>
    </citation>
    <scope>NUCLEOTIDE SEQUENCE [LARGE SCALE GENOMIC DNA]</scope>
    <source>
        <strain>CT18</strain>
    </source>
</reference>
<reference key="2">
    <citation type="journal article" date="2003" name="J. Bacteriol.">
        <title>Comparative genomics of Salmonella enterica serovar Typhi strains Ty2 and CT18.</title>
        <authorList>
            <person name="Deng W."/>
            <person name="Liou S.-R."/>
            <person name="Plunkett G. III"/>
            <person name="Mayhew G.F."/>
            <person name="Rose D.J."/>
            <person name="Burland V."/>
            <person name="Kodoyianni V."/>
            <person name="Schwartz D.C."/>
            <person name="Blattner F.R."/>
        </authorList>
    </citation>
    <scope>NUCLEOTIDE SEQUENCE [LARGE SCALE GENOMIC DNA]</scope>
    <source>
        <strain>ATCC 700931 / Ty2</strain>
    </source>
</reference>
<sequence>MALPIIIDCDPGHDDAIALVLALASPELEVKAITSSAGNQTPEKTLRNVLRMLTLLKRPDIPVAGGAVKPLMRELIIADNVHGESGLDGPALPEPSFAPQSGTAVELMAKTLRESAQPVTIVSTGPQTNVALLLNSHPELHTKIARIVIMGGAMALGNWTPAAEFNIYVDPEAAEIVFQSGIPVVMAGLDVTHKAQIHAADIERFRDIGNPISTIVAELLDFFFEYHKDEKWGFVGAPLHDPCTIAWLLKPEIFTTVERWVGVETQGKYTQGMTVVDYYFLTGNKPNATVMVDVDRQGFVDLLAERLQYYA</sequence>
<dbReference type="EC" id="3.2.-.-" evidence="1"/>
<dbReference type="EMBL" id="AL513382">
    <property type="protein sequence ID" value="CAD05132.1"/>
    <property type="molecule type" value="Genomic_DNA"/>
</dbReference>
<dbReference type="EMBL" id="AE014613">
    <property type="protein sequence ID" value="AAO69816.1"/>
    <property type="molecule type" value="Genomic_DNA"/>
</dbReference>
<dbReference type="RefSeq" id="NP_455230.1">
    <property type="nucleotide sequence ID" value="NC_003198.1"/>
</dbReference>
<dbReference type="RefSeq" id="WP_001207423.1">
    <property type="nucleotide sequence ID" value="NZ_WSUR01000015.1"/>
</dbReference>
<dbReference type="SMR" id="Q8Z8H0"/>
<dbReference type="STRING" id="220341.gene:17584713"/>
<dbReference type="KEGG" id="stt:t2212"/>
<dbReference type="KEGG" id="sty:STY0706"/>
<dbReference type="PATRIC" id="fig|220341.7.peg.711"/>
<dbReference type="eggNOG" id="COG1957">
    <property type="taxonomic scope" value="Bacteria"/>
</dbReference>
<dbReference type="HOGENOM" id="CLU_036838_2_0_6"/>
<dbReference type="OMA" id="WVGVETK"/>
<dbReference type="OrthoDB" id="9797882at2"/>
<dbReference type="Proteomes" id="UP000000541">
    <property type="component" value="Chromosome"/>
</dbReference>
<dbReference type="Proteomes" id="UP000002670">
    <property type="component" value="Chromosome"/>
</dbReference>
<dbReference type="GO" id="GO:0005829">
    <property type="term" value="C:cytosol"/>
    <property type="evidence" value="ECO:0007669"/>
    <property type="project" value="TreeGrafter"/>
</dbReference>
<dbReference type="GO" id="GO:0008477">
    <property type="term" value="F:purine nucleosidase activity"/>
    <property type="evidence" value="ECO:0007669"/>
    <property type="project" value="TreeGrafter"/>
</dbReference>
<dbReference type="GO" id="GO:0045437">
    <property type="term" value="F:uridine nucleosidase activity"/>
    <property type="evidence" value="ECO:0007669"/>
    <property type="project" value="InterPro"/>
</dbReference>
<dbReference type="GO" id="GO:0015949">
    <property type="term" value="P:nucleobase-containing small molecule interconversion"/>
    <property type="evidence" value="ECO:0007669"/>
    <property type="project" value="InterPro"/>
</dbReference>
<dbReference type="GO" id="GO:0006152">
    <property type="term" value="P:purine nucleoside catabolic process"/>
    <property type="evidence" value="ECO:0007669"/>
    <property type="project" value="TreeGrafter"/>
</dbReference>
<dbReference type="GO" id="GO:0006206">
    <property type="term" value="P:pyrimidine nucleobase metabolic process"/>
    <property type="evidence" value="ECO:0007669"/>
    <property type="project" value="UniProtKB-UniRule"/>
</dbReference>
<dbReference type="CDD" id="cd02651">
    <property type="entry name" value="nuc_hydro_IU_UC_XIUA"/>
    <property type="match status" value="1"/>
</dbReference>
<dbReference type="FunFam" id="3.90.245.10:FF:000001">
    <property type="entry name" value="Pyrimidine-specific ribonucleoside hydrolase RihA"/>
    <property type="match status" value="1"/>
</dbReference>
<dbReference type="Gene3D" id="3.90.245.10">
    <property type="entry name" value="Ribonucleoside hydrolase-like"/>
    <property type="match status" value="1"/>
</dbReference>
<dbReference type="HAMAP" id="MF_01431">
    <property type="entry name" value="Pyrim_hydro_RihA"/>
    <property type="match status" value="1"/>
</dbReference>
<dbReference type="InterPro" id="IPR015910">
    <property type="entry name" value="I/U_nuclsd_hydro_CS"/>
</dbReference>
<dbReference type="InterPro" id="IPR001910">
    <property type="entry name" value="Inosine/uridine_hydrolase_dom"/>
</dbReference>
<dbReference type="InterPro" id="IPR023186">
    <property type="entry name" value="IUNH"/>
</dbReference>
<dbReference type="InterPro" id="IPR022975">
    <property type="entry name" value="Pyrim_hydro_RihA"/>
</dbReference>
<dbReference type="InterPro" id="IPR036452">
    <property type="entry name" value="Ribo_hydro-like"/>
</dbReference>
<dbReference type="NCBIfam" id="NF007761">
    <property type="entry name" value="PRK10443.1"/>
    <property type="match status" value="1"/>
</dbReference>
<dbReference type="PANTHER" id="PTHR12304">
    <property type="entry name" value="INOSINE-URIDINE PREFERRING NUCLEOSIDE HYDROLASE"/>
    <property type="match status" value="1"/>
</dbReference>
<dbReference type="PANTHER" id="PTHR12304:SF4">
    <property type="entry name" value="URIDINE NUCLEOSIDASE"/>
    <property type="match status" value="1"/>
</dbReference>
<dbReference type="Pfam" id="PF01156">
    <property type="entry name" value="IU_nuc_hydro"/>
    <property type="match status" value="1"/>
</dbReference>
<dbReference type="SUPFAM" id="SSF53590">
    <property type="entry name" value="Nucleoside hydrolase"/>
    <property type="match status" value="1"/>
</dbReference>
<dbReference type="PROSITE" id="PS01247">
    <property type="entry name" value="IUNH"/>
    <property type="match status" value="1"/>
</dbReference>